<reference key="1">
    <citation type="journal article" date="2003" name="Nat. Biotechnol.">
        <title>The genome sequence of the entomopathogenic bacterium Photorhabdus luminescens.</title>
        <authorList>
            <person name="Duchaud E."/>
            <person name="Rusniok C."/>
            <person name="Frangeul L."/>
            <person name="Buchrieser C."/>
            <person name="Givaudan A."/>
            <person name="Taourit S."/>
            <person name="Bocs S."/>
            <person name="Boursaux-Eude C."/>
            <person name="Chandler M."/>
            <person name="Charles J.-F."/>
            <person name="Dassa E."/>
            <person name="Derose R."/>
            <person name="Derzelle S."/>
            <person name="Freyssinet G."/>
            <person name="Gaudriault S."/>
            <person name="Medigue C."/>
            <person name="Lanois A."/>
            <person name="Powell K."/>
            <person name="Siguier P."/>
            <person name="Vincent R."/>
            <person name="Wingate V."/>
            <person name="Zouine M."/>
            <person name="Glaser P."/>
            <person name="Boemare N."/>
            <person name="Danchin A."/>
            <person name="Kunst F."/>
        </authorList>
    </citation>
    <scope>NUCLEOTIDE SEQUENCE [LARGE SCALE GENOMIC DNA]</scope>
    <source>
        <strain>DSM 15139 / CIP 105565 / TT01</strain>
    </source>
</reference>
<dbReference type="EMBL" id="BX571863">
    <property type="protein sequence ID" value="CAE13580.1"/>
    <property type="molecule type" value="Genomic_DNA"/>
</dbReference>
<dbReference type="SMR" id="Q7N772"/>
<dbReference type="STRING" id="243265.plu1286"/>
<dbReference type="KEGG" id="plu:plu1286"/>
<dbReference type="eggNOG" id="COG1780">
    <property type="taxonomic scope" value="Bacteria"/>
</dbReference>
<dbReference type="HOGENOM" id="CLU_114845_0_0_6"/>
<dbReference type="OrthoDB" id="350535at2"/>
<dbReference type="Proteomes" id="UP000002514">
    <property type="component" value="Chromosome"/>
</dbReference>
<dbReference type="GO" id="GO:0010181">
    <property type="term" value="F:FMN binding"/>
    <property type="evidence" value="ECO:0007669"/>
    <property type="project" value="InterPro"/>
</dbReference>
<dbReference type="GO" id="GO:0036211">
    <property type="term" value="P:protein modification process"/>
    <property type="evidence" value="ECO:0007669"/>
    <property type="project" value="InterPro"/>
</dbReference>
<dbReference type="Gene3D" id="3.40.50.360">
    <property type="match status" value="1"/>
</dbReference>
<dbReference type="HAMAP" id="MF_00128">
    <property type="entry name" value="NrdI"/>
    <property type="match status" value="1"/>
</dbReference>
<dbReference type="InterPro" id="IPR029039">
    <property type="entry name" value="Flavoprotein-like_sf"/>
</dbReference>
<dbReference type="InterPro" id="IPR020852">
    <property type="entry name" value="RNR_Ib_NrdI_bac"/>
</dbReference>
<dbReference type="InterPro" id="IPR004465">
    <property type="entry name" value="RNR_NrdI"/>
</dbReference>
<dbReference type="NCBIfam" id="TIGR00333">
    <property type="entry name" value="nrdI"/>
    <property type="match status" value="1"/>
</dbReference>
<dbReference type="PANTHER" id="PTHR37297">
    <property type="entry name" value="PROTEIN NRDI"/>
    <property type="match status" value="1"/>
</dbReference>
<dbReference type="PANTHER" id="PTHR37297:SF1">
    <property type="entry name" value="PROTEIN NRDI"/>
    <property type="match status" value="1"/>
</dbReference>
<dbReference type="Pfam" id="PF07972">
    <property type="entry name" value="Flavodoxin_NdrI"/>
    <property type="match status" value="1"/>
</dbReference>
<dbReference type="PIRSF" id="PIRSF005087">
    <property type="entry name" value="NrdI"/>
    <property type="match status" value="1"/>
</dbReference>
<dbReference type="SUPFAM" id="SSF52218">
    <property type="entry name" value="Flavoproteins"/>
    <property type="match status" value="1"/>
</dbReference>
<proteinExistence type="inferred from homology"/>
<comment type="function">
    <text evidence="1">Probably involved in ribonucleotide reductase function.</text>
</comment>
<comment type="similarity">
    <text evidence="1">Belongs to the NrdI family.</text>
</comment>
<evidence type="ECO:0000255" key="1">
    <source>
        <dbReference type="HAMAP-Rule" id="MF_00128"/>
    </source>
</evidence>
<sequence>MNINPLIYFSSSSSNSHRFVQKLEIPAFRIPINQSDSPLNITSPYILLTPSYGGGSTKGAVPPQVIRFLNIAENRAFIRGVIAAGNTNFGEAYGIAGRIISEKCRIPLLYRFELLGTEEDVQRVRQGIQRFWQHDSLENM</sequence>
<protein>
    <recommendedName>
        <fullName evidence="1">Protein NrdI</fullName>
    </recommendedName>
</protein>
<name>NRDI_PHOLL</name>
<accession>Q7N772</accession>
<gene>
    <name evidence="1" type="primary">nrdI</name>
    <name type="ordered locus">plu1286</name>
</gene>
<organism>
    <name type="scientific">Photorhabdus laumondii subsp. laumondii (strain DSM 15139 / CIP 105565 / TT01)</name>
    <name type="common">Photorhabdus luminescens subsp. laumondii</name>
    <dbReference type="NCBI Taxonomy" id="243265"/>
    <lineage>
        <taxon>Bacteria</taxon>
        <taxon>Pseudomonadati</taxon>
        <taxon>Pseudomonadota</taxon>
        <taxon>Gammaproteobacteria</taxon>
        <taxon>Enterobacterales</taxon>
        <taxon>Morganellaceae</taxon>
        <taxon>Photorhabdus</taxon>
    </lineage>
</organism>
<keyword id="KW-1185">Reference proteome</keyword>
<feature type="chain" id="PRO_0000164328" description="Protein NrdI">
    <location>
        <begin position="1"/>
        <end position="140"/>
    </location>
</feature>